<dbReference type="EC" id="3.1.13.1" evidence="2"/>
<dbReference type="EMBL" id="AF222894">
    <property type="protein sequence ID" value="AAF30462.1"/>
    <property type="molecule type" value="Genomic_DNA"/>
</dbReference>
<dbReference type="RefSeq" id="WP_006688547.1">
    <property type="nucleotide sequence ID" value="NC_002162.1"/>
</dbReference>
<dbReference type="SMR" id="Q9PR88"/>
<dbReference type="STRING" id="273119.UU057"/>
<dbReference type="EnsemblBacteria" id="AAF30462">
    <property type="protein sequence ID" value="AAF30462"/>
    <property type="gene ID" value="UU057"/>
</dbReference>
<dbReference type="GeneID" id="29672268"/>
<dbReference type="KEGG" id="uur:UU057"/>
<dbReference type="eggNOG" id="COG0557">
    <property type="taxonomic scope" value="Bacteria"/>
</dbReference>
<dbReference type="HOGENOM" id="CLU_002333_7_3_14"/>
<dbReference type="OrthoDB" id="9764149at2"/>
<dbReference type="Proteomes" id="UP000000423">
    <property type="component" value="Chromosome"/>
</dbReference>
<dbReference type="GO" id="GO:0005829">
    <property type="term" value="C:cytosol"/>
    <property type="evidence" value="ECO:0007669"/>
    <property type="project" value="TreeGrafter"/>
</dbReference>
<dbReference type="GO" id="GO:0008859">
    <property type="term" value="F:exoribonuclease II activity"/>
    <property type="evidence" value="ECO:0007669"/>
    <property type="project" value="UniProtKB-UniRule"/>
</dbReference>
<dbReference type="GO" id="GO:0003723">
    <property type="term" value="F:RNA binding"/>
    <property type="evidence" value="ECO:0007669"/>
    <property type="project" value="UniProtKB-UniRule"/>
</dbReference>
<dbReference type="GO" id="GO:0006402">
    <property type="term" value="P:mRNA catabolic process"/>
    <property type="evidence" value="ECO:0007669"/>
    <property type="project" value="TreeGrafter"/>
</dbReference>
<dbReference type="CDD" id="cd04471">
    <property type="entry name" value="S1_RNase_R"/>
    <property type="match status" value="1"/>
</dbReference>
<dbReference type="Gene3D" id="2.40.50.140">
    <property type="entry name" value="Nucleic acid-binding proteins"/>
    <property type="match status" value="2"/>
</dbReference>
<dbReference type="HAMAP" id="MF_01895">
    <property type="entry name" value="RNase_R"/>
    <property type="match status" value="1"/>
</dbReference>
<dbReference type="InterPro" id="IPR040476">
    <property type="entry name" value="CSD2"/>
</dbReference>
<dbReference type="InterPro" id="IPR012340">
    <property type="entry name" value="NA-bd_OB-fold"/>
</dbReference>
<dbReference type="InterPro" id="IPR001900">
    <property type="entry name" value="RNase_II/R"/>
</dbReference>
<dbReference type="InterPro" id="IPR022966">
    <property type="entry name" value="RNase_II/R_CS"/>
</dbReference>
<dbReference type="InterPro" id="IPR004476">
    <property type="entry name" value="RNase_II/RNase_R"/>
</dbReference>
<dbReference type="InterPro" id="IPR011805">
    <property type="entry name" value="RNase_R"/>
</dbReference>
<dbReference type="InterPro" id="IPR050180">
    <property type="entry name" value="RNR_Ribonuclease"/>
</dbReference>
<dbReference type="InterPro" id="IPR003029">
    <property type="entry name" value="S1_domain"/>
</dbReference>
<dbReference type="NCBIfam" id="TIGR00358">
    <property type="entry name" value="3_prime_RNase"/>
    <property type="match status" value="1"/>
</dbReference>
<dbReference type="NCBIfam" id="TIGR02063">
    <property type="entry name" value="RNase_R"/>
    <property type="match status" value="1"/>
</dbReference>
<dbReference type="PANTHER" id="PTHR23355:SF9">
    <property type="entry name" value="DIS3-LIKE EXONUCLEASE 2"/>
    <property type="match status" value="1"/>
</dbReference>
<dbReference type="PANTHER" id="PTHR23355">
    <property type="entry name" value="RIBONUCLEASE"/>
    <property type="match status" value="1"/>
</dbReference>
<dbReference type="Pfam" id="PF17876">
    <property type="entry name" value="CSD2"/>
    <property type="match status" value="1"/>
</dbReference>
<dbReference type="Pfam" id="PF00773">
    <property type="entry name" value="RNB"/>
    <property type="match status" value="1"/>
</dbReference>
<dbReference type="Pfam" id="PF00575">
    <property type="entry name" value="S1"/>
    <property type="match status" value="1"/>
</dbReference>
<dbReference type="SMART" id="SM00955">
    <property type="entry name" value="RNB"/>
    <property type="match status" value="1"/>
</dbReference>
<dbReference type="SMART" id="SM00316">
    <property type="entry name" value="S1"/>
    <property type="match status" value="1"/>
</dbReference>
<dbReference type="SUPFAM" id="SSF50249">
    <property type="entry name" value="Nucleic acid-binding proteins"/>
    <property type="match status" value="2"/>
</dbReference>
<dbReference type="PROSITE" id="PS01175">
    <property type="entry name" value="RIBONUCLEASE_II"/>
    <property type="match status" value="1"/>
</dbReference>
<dbReference type="PROSITE" id="PS50126">
    <property type="entry name" value="S1"/>
    <property type="match status" value="1"/>
</dbReference>
<name>RNR_UREPA</name>
<reference key="1">
    <citation type="journal article" date="2000" name="Nature">
        <title>The complete sequence of the mucosal pathogen Ureaplasma urealyticum.</title>
        <authorList>
            <person name="Glass J.I."/>
            <person name="Lefkowitz E.J."/>
            <person name="Glass J.S."/>
            <person name="Heiner C.R."/>
            <person name="Chen E.Y."/>
            <person name="Cassell G.H."/>
        </authorList>
    </citation>
    <scope>NUCLEOTIDE SEQUENCE [LARGE SCALE GENOMIC DNA]</scope>
    <source>
        <strain>ATCC 700970</strain>
    </source>
</reference>
<gene>
    <name evidence="2" type="primary">rnr</name>
    <name type="synonym">vacB</name>
    <name type="ordered locus">UU057</name>
</gene>
<protein>
    <recommendedName>
        <fullName evidence="2">Ribonuclease R</fullName>
        <shortName evidence="2">RNase R</shortName>
        <ecNumber evidence="2">3.1.13.1</ecNumber>
    </recommendedName>
    <alternativeName>
        <fullName>VacB protein homolog</fullName>
    </alternativeName>
</protein>
<accession>Q9PR88</accession>
<comment type="function">
    <text evidence="2">3'-5' exoribonuclease that releases 5'-nucleoside monophosphates and is involved in maturation of structured RNAs.</text>
</comment>
<comment type="catalytic activity">
    <reaction evidence="2">
        <text>Exonucleolytic cleavage in the 3'- to 5'-direction to yield nucleoside 5'-phosphates.</text>
        <dbReference type="EC" id="3.1.13.1"/>
    </reaction>
</comment>
<comment type="subcellular location">
    <subcellularLocation>
        <location evidence="2">Cytoplasm</location>
    </subcellularLocation>
</comment>
<comment type="similarity">
    <text evidence="2">Belongs to the RNR ribonuclease family. RNase R subfamily.</text>
</comment>
<proteinExistence type="inferred from homology"/>
<feature type="chain" id="PRO_0000166414" description="Ribonuclease R">
    <location>
        <begin position="1"/>
        <end position="721"/>
    </location>
</feature>
<feature type="domain" description="RNB" evidence="1">
    <location>
        <begin position="249"/>
        <end position="587"/>
    </location>
</feature>
<feature type="domain" description="S1 motif" evidence="2">
    <location>
        <begin position="639"/>
        <end position="719"/>
    </location>
</feature>
<keyword id="KW-0963">Cytoplasm</keyword>
<keyword id="KW-0269">Exonuclease</keyword>
<keyword id="KW-0378">Hydrolase</keyword>
<keyword id="KW-0540">Nuclease</keyword>
<keyword id="KW-1185">Reference proteome</keyword>
<keyword id="KW-0694">RNA-binding</keyword>
<evidence type="ECO:0000255" key="1"/>
<evidence type="ECO:0000255" key="2">
    <source>
        <dbReference type="HAMAP-Rule" id="MF_01895"/>
    </source>
</evidence>
<sequence>MSDFTKQTITEVISKEERPIPAAILAKKVLEKIPTLNKTDVYKLIDLLIQENTIKKLENNRLVIGYLDYEFDHEIKQGIITINSKGDGFIKEDNTEIEYYVNKKYLNGALKKDSVKFVKLKKEPKNNLQDAAVIEIVGHAKDHYVGQFITLPNGGYYIFVDDPLFYLNINLKDTTGLVNGHKILFKIISQTTKDAIAELVHIIGHKNDVGSDVLSIVYDNGIDPTFDPQVVDLASKLEFYVDEHQNKIRRSIIDREIISIDPVGSKDIDDAVYVKKLNDQRYFLGISIADVSFYVQPNTILDADAFKRGTSTYLVDRVIPMLPHNISNNICSLNEGEFRMCITCDMVIDKDGKICWKDVYPAIMKNYRQMSYDEVNDFYEGKSRFESATLTMKEMLLEAKELHHILRNKKIKDGYVDFDIKEPKIILDETGVPIDIKIYERKTAQMMVEDFMIAANEAVTMFAEEHMDKTLKEFNLEMPFIYRVHDKPSIINLQKFEIEAKKLSFNISHDFENIQPNTISNWLKMNDNHVNLPLISKLLLRSMAKASYEIINTGHFGLASDNYTHFTSPIRRYPDLIVHRLLWMFIFDSQSYTDKQRVELVNKLKLITEESNKNEIIAVKTERDVNAAKFAEYMNLHIGKEFIGVVTTVSSFGVFVELENTIEGLIRIKNLKDDFYDFIPENMTLVGQKRKKIITVGNKVRVRVIEANKLTRKIDFELVAQ</sequence>
<organism>
    <name type="scientific">Ureaplasma parvum serovar 3 (strain ATCC 700970)</name>
    <dbReference type="NCBI Taxonomy" id="273119"/>
    <lineage>
        <taxon>Bacteria</taxon>
        <taxon>Bacillati</taxon>
        <taxon>Mycoplasmatota</taxon>
        <taxon>Mycoplasmoidales</taxon>
        <taxon>Mycoplasmoidaceae</taxon>
        <taxon>Ureaplasma</taxon>
    </lineage>
</organism>